<organism>
    <name type="scientific">Burkholderia ambifaria (strain MC40-6)</name>
    <dbReference type="NCBI Taxonomy" id="398577"/>
    <lineage>
        <taxon>Bacteria</taxon>
        <taxon>Pseudomonadati</taxon>
        <taxon>Pseudomonadota</taxon>
        <taxon>Betaproteobacteria</taxon>
        <taxon>Burkholderiales</taxon>
        <taxon>Burkholderiaceae</taxon>
        <taxon>Burkholderia</taxon>
        <taxon>Burkholderia cepacia complex</taxon>
    </lineage>
</organism>
<feature type="chain" id="PRO_0000370916" description="ATP synthase subunit delta">
    <location>
        <begin position="1"/>
        <end position="179"/>
    </location>
</feature>
<reference key="1">
    <citation type="submission" date="2008-04" db="EMBL/GenBank/DDBJ databases">
        <title>Complete sequence of chromosome 1 of Burkholderia ambifaria MC40-6.</title>
        <authorList>
            <person name="Copeland A."/>
            <person name="Lucas S."/>
            <person name="Lapidus A."/>
            <person name="Glavina del Rio T."/>
            <person name="Dalin E."/>
            <person name="Tice H."/>
            <person name="Pitluck S."/>
            <person name="Chain P."/>
            <person name="Malfatti S."/>
            <person name="Shin M."/>
            <person name="Vergez L."/>
            <person name="Lang D."/>
            <person name="Schmutz J."/>
            <person name="Larimer F."/>
            <person name="Land M."/>
            <person name="Hauser L."/>
            <person name="Kyrpides N."/>
            <person name="Lykidis A."/>
            <person name="Ramette A."/>
            <person name="Konstantinidis K."/>
            <person name="Tiedje J."/>
            <person name="Richardson P."/>
        </authorList>
    </citation>
    <scope>NUCLEOTIDE SEQUENCE [LARGE SCALE GENOMIC DNA]</scope>
    <source>
        <strain>MC40-6</strain>
    </source>
</reference>
<evidence type="ECO:0000255" key="1">
    <source>
        <dbReference type="HAMAP-Rule" id="MF_01416"/>
    </source>
</evidence>
<gene>
    <name evidence="1" type="primary">atpH</name>
    <name type="ordered locus">BamMC406_0103</name>
</gene>
<proteinExistence type="inferred from homology"/>
<sequence length="179" mass="19033">MAELATIARPYAEALFRVAEGGDIAAWSTLVQELAQVARLPEVLSVASSPKVTRTQVVELLLAAVKSPVAAGAEAKNFVQMLVDNHRIALLPEIAEQFEALKNEREGAADAEIVSAFPLNGADLESLVSGLERKFKRKLKPTVEVDSSLIGGVRVTVGDEVLDTSVRARLASMQAALTA</sequence>
<dbReference type="EMBL" id="CP001025">
    <property type="protein sequence ID" value="ACB62605.1"/>
    <property type="molecule type" value="Genomic_DNA"/>
</dbReference>
<dbReference type="RefSeq" id="WP_006756468.1">
    <property type="nucleotide sequence ID" value="NC_010551.1"/>
</dbReference>
<dbReference type="SMR" id="B1YQL1"/>
<dbReference type="KEGG" id="bac:BamMC406_0103"/>
<dbReference type="HOGENOM" id="CLU_085114_3_0_4"/>
<dbReference type="OrthoDB" id="9816221at2"/>
<dbReference type="Proteomes" id="UP000001680">
    <property type="component" value="Chromosome 1"/>
</dbReference>
<dbReference type="GO" id="GO:0005886">
    <property type="term" value="C:plasma membrane"/>
    <property type="evidence" value="ECO:0007669"/>
    <property type="project" value="UniProtKB-SubCell"/>
</dbReference>
<dbReference type="GO" id="GO:0045259">
    <property type="term" value="C:proton-transporting ATP synthase complex"/>
    <property type="evidence" value="ECO:0007669"/>
    <property type="project" value="UniProtKB-KW"/>
</dbReference>
<dbReference type="GO" id="GO:0046933">
    <property type="term" value="F:proton-transporting ATP synthase activity, rotational mechanism"/>
    <property type="evidence" value="ECO:0007669"/>
    <property type="project" value="UniProtKB-UniRule"/>
</dbReference>
<dbReference type="Gene3D" id="1.10.520.20">
    <property type="entry name" value="N-terminal domain of the delta subunit of the F1F0-ATP synthase"/>
    <property type="match status" value="1"/>
</dbReference>
<dbReference type="HAMAP" id="MF_01416">
    <property type="entry name" value="ATP_synth_delta_bact"/>
    <property type="match status" value="1"/>
</dbReference>
<dbReference type="InterPro" id="IPR026015">
    <property type="entry name" value="ATP_synth_OSCP/delta_N_sf"/>
</dbReference>
<dbReference type="InterPro" id="IPR000711">
    <property type="entry name" value="ATPase_OSCP/dsu"/>
</dbReference>
<dbReference type="NCBIfam" id="TIGR01145">
    <property type="entry name" value="ATP_synt_delta"/>
    <property type="match status" value="1"/>
</dbReference>
<dbReference type="NCBIfam" id="NF004402">
    <property type="entry name" value="PRK05758.2-2"/>
    <property type="match status" value="1"/>
</dbReference>
<dbReference type="PANTHER" id="PTHR11910">
    <property type="entry name" value="ATP SYNTHASE DELTA CHAIN"/>
    <property type="match status" value="1"/>
</dbReference>
<dbReference type="Pfam" id="PF00213">
    <property type="entry name" value="OSCP"/>
    <property type="match status" value="1"/>
</dbReference>
<dbReference type="PRINTS" id="PR00125">
    <property type="entry name" value="ATPASEDELTA"/>
</dbReference>
<dbReference type="SUPFAM" id="SSF47928">
    <property type="entry name" value="N-terminal domain of the delta subunit of the F1F0-ATP synthase"/>
    <property type="match status" value="1"/>
</dbReference>
<keyword id="KW-0066">ATP synthesis</keyword>
<keyword id="KW-0997">Cell inner membrane</keyword>
<keyword id="KW-1003">Cell membrane</keyword>
<keyword id="KW-0139">CF(1)</keyword>
<keyword id="KW-0375">Hydrogen ion transport</keyword>
<keyword id="KW-0406">Ion transport</keyword>
<keyword id="KW-0472">Membrane</keyword>
<keyword id="KW-0813">Transport</keyword>
<comment type="function">
    <text evidence="1">F(1)F(0) ATP synthase produces ATP from ADP in the presence of a proton or sodium gradient. F-type ATPases consist of two structural domains, F(1) containing the extramembraneous catalytic core and F(0) containing the membrane proton channel, linked together by a central stalk and a peripheral stalk. During catalysis, ATP synthesis in the catalytic domain of F(1) is coupled via a rotary mechanism of the central stalk subunits to proton translocation.</text>
</comment>
<comment type="function">
    <text evidence="1">This protein is part of the stalk that links CF(0) to CF(1). It either transmits conformational changes from CF(0) to CF(1) or is implicated in proton conduction.</text>
</comment>
<comment type="subunit">
    <text evidence="1">F-type ATPases have 2 components, F(1) - the catalytic core - and F(0) - the membrane proton channel. F(1) has five subunits: alpha(3), beta(3), gamma(1), delta(1), epsilon(1). F(0) has three main subunits: a(1), b(2) and c(10-14). The alpha and beta chains form an alternating ring which encloses part of the gamma chain. F(1) is attached to F(0) by a central stalk formed by the gamma and epsilon chains, while a peripheral stalk is formed by the delta and b chains.</text>
</comment>
<comment type="subcellular location">
    <subcellularLocation>
        <location evidence="1">Cell inner membrane</location>
        <topology evidence="1">Peripheral membrane protein</topology>
    </subcellularLocation>
</comment>
<comment type="similarity">
    <text evidence="1">Belongs to the ATPase delta chain family.</text>
</comment>
<accession>B1YQL1</accession>
<protein>
    <recommendedName>
        <fullName evidence="1">ATP synthase subunit delta</fullName>
    </recommendedName>
    <alternativeName>
        <fullName evidence="1">ATP synthase F(1) sector subunit delta</fullName>
    </alternativeName>
    <alternativeName>
        <fullName evidence="1">F-type ATPase subunit delta</fullName>
        <shortName evidence="1">F-ATPase subunit delta</shortName>
    </alternativeName>
</protein>
<name>ATPD_BURA4</name>